<proteinExistence type="inferred from homology"/>
<gene>
    <name evidence="1" type="primary">folD</name>
    <name type="ordered locus">AFE_1877</name>
</gene>
<accession>B7JBX9</accession>
<name>FOLD_ACIF2</name>
<keyword id="KW-0028">Amino-acid biosynthesis</keyword>
<keyword id="KW-0368">Histidine biosynthesis</keyword>
<keyword id="KW-0378">Hydrolase</keyword>
<keyword id="KW-0486">Methionine biosynthesis</keyword>
<keyword id="KW-0511">Multifunctional enzyme</keyword>
<keyword id="KW-0521">NADP</keyword>
<keyword id="KW-0554">One-carbon metabolism</keyword>
<keyword id="KW-0560">Oxidoreductase</keyword>
<keyword id="KW-0658">Purine biosynthesis</keyword>
<keyword id="KW-1185">Reference proteome</keyword>
<comment type="function">
    <text evidence="1">Catalyzes the oxidation of 5,10-methylenetetrahydrofolate to 5,10-methenyltetrahydrofolate and then the hydrolysis of 5,10-methenyltetrahydrofolate to 10-formyltetrahydrofolate.</text>
</comment>
<comment type="catalytic activity">
    <reaction evidence="1">
        <text>(6R)-5,10-methylene-5,6,7,8-tetrahydrofolate + NADP(+) = (6R)-5,10-methenyltetrahydrofolate + NADPH</text>
        <dbReference type="Rhea" id="RHEA:22812"/>
        <dbReference type="ChEBI" id="CHEBI:15636"/>
        <dbReference type="ChEBI" id="CHEBI:57455"/>
        <dbReference type="ChEBI" id="CHEBI:57783"/>
        <dbReference type="ChEBI" id="CHEBI:58349"/>
        <dbReference type="EC" id="1.5.1.5"/>
    </reaction>
</comment>
<comment type="catalytic activity">
    <reaction evidence="1">
        <text>(6R)-5,10-methenyltetrahydrofolate + H2O = (6R)-10-formyltetrahydrofolate + H(+)</text>
        <dbReference type="Rhea" id="RHEA:23700"/>
        <dbReference type="ChEBI" id="CHEBI:15377"/>
        <dbReference type="ChEBI" id="CHEBI:15378"/>
        <dbReference type="ChEBI" id="CHEBI:57455"/>
        <dbReference type="ChEBI" id="CHEBI:195366"/>
        <dbReference type="EC" id="3.5.4.9"/>
    </reaction>
</comment>
<comment type="pathway">
    <text evidence="1">One-carbon metabolism; tetrahydrofolate interconversion.</text>
</comment>
<comment type="subunit">
    <text evidence="1">Homodimer.</text>
</comment>
<comment type="similarity">
    <text evidence="1">Belongs to the tetrahydrofolate dehydrogenase/cyclohydrolase family.</text>
</comment>
<feature type="chain" id="PRO_1000196743" description="Bifunctional protein FolD">
    <location>
        <begin position="1"/>
        <end position="288"/>
    </location>
</feature>
<feature type="binding site" evidence="1">
    <location>
        <begin position="166"/>
        <end position="168"/>
    </location>
    <ligand>
        <name>NADP(+)</name>
        <dbReference type="ChEBI" id="CHEBI:58349"/>
    </ligand>
</feature>
<feature type="binding site" evidence="1">
    <location>
        <position position="232"/>
    </location>
    <ligand>
        <name>NADP(+)</name>
        <dbReference type="ChEBI" id="CHEBI:58349"/>
    </ligand>
</feature>
<dbReference type="EC" id="1.5.1.5" evidence="1"/>
<dbReference type="EC" id="3.5.4.9" evidence="1"/>
<dbReference type="EMBL" id="CP001219">
    <property type="protein sequence ID" value="ACK79087.1"/>
    <property type="molecule type" value="Genomic_DNA"/>
</dbReference>
<dbReference type="RefSeq" id="WP_012536816.1">
    <property type="nucleotide sequence ID" value="NC_011761.1"/>
</dbReference>
<dbReference type="SMR" id="B7JBX9"/>
<dbReference type="STRING" id="243159.AFE_1877"/>
<dbReference type="PaxDb" id="243159-AFE_1877"/>
<dbReference type="GeneID" id="65281033"/>
<dbReference type="KEGG" id="afr:AFE_1877"/>
<dbReference type="eggNOG" id="COG0190">
    <property type="taxonomic scope" value="Bacteria"/>
</dbReference>
<dbReference type="HOGENOM" id="CLU_034045_2_1_6"/>
<dbReference type="UniPathway" id="UPA00193"/>
<dbReference type="Proteomes" id="UP000001362">
    <property type="component" value="Chromosome"/>
</dbReference>
<dbReference type="GO" id="GO:0005829">
    <property type="term" value="C:cytosol"/>
    <property type="evidence" value="ECO:0007669"/>
    <property type="project" value="TreeGrafter"/>
</dbReference>
<dbReference type="GO" id="GO:0004477">
    <property type="term" value="F:methenyltetrahydrofolate cyclohydrolase activity"/>
    <property type="evidence" value="ECO:0007669"/>
    <property type="project" value="UniProtKB-UniRule"/>
</dbReference>
<dbReference type="GO" id="GO:0004488">
    <property type="term" value="F:methylenetetrahydrofolate dehydrogenase (NADP+) activity"/>
    <property type="evidence" value="ECO:0007669"/>
    <property type="project" value="UniProtKB-UniRule"/>
</dbReference>
<dbReference type="GO" id="GO:0000105">
    <property type="term" value="P:L-histidine biosynthetic process"/>
    <property type="evidence" value="ECO:0007669"/>
    <property type="project" value="UniProtKB-KW"/>
</dbReference>
<dbReference type="GO" id="GO:0009086">
    <property type="term" value="P:methionine biosynthetic process"/>
    <property type="evidence" value="ECO:0007669"/>
    <property type="project" value="UniProtKB-KW"/>
</dbReference>
<dbReference type="GO" id="GO:0006164">
    <property type="term" value="P:purine nucleotide biosynthetic process"/>
    <property type="evidence" value="ECO:0007669"/>
    <property type="project" value="UniProtKB-KW"/>
</dbReference>
<dbReference type="GO" id="GO:0035999">
    <property type="term" value="P:tetrahydrofolate interconversion"/>
    <property type="evidence" value="ECO:0007669"/>
    <property type="project" value="UniProtKB-UniRule"/>
</dbReference>
<dbReference type="CDD" id="cd01080">
    <property type="entry name" value="NAD_bind_m-THF_DH_Cyclohyd"/>
    <property type="match status" value="1"/>
</dbReference>
<dbReference type="FunFam" id="3.40.50.720:FF:000006">
    <property type="entry name" value="Bifunctional protein FolD"/>
    <property type="match status" value="1"/>
</dbReference>
<dbReference type="FunFam" id="3.40.50.10860:FF:000005">
    <property type="entry name" value="C-1-tetrahydrofolate synthase, cytoplasmic, putative"/>
    <property type="match status" value="1"/>
</dbReference>
<dbReference type="Gene3D" id="3.40.50.10860">
    <property type="entry name" value="Leucine Dehydrogenase, chain A, domain 1"/>
    <property type="match status" value="1"/>
</dbReference>
<dbReference type="Gene3D" id="3.40.50.720">
    <property type="entry name" value="NAD(P)-binding Rossmann-like Domain"/>
    <property type="match status" value="1"/>
</dbReference>
<dbReference type="HAMAP" id="MF_01576">
    <property type="entry name" value="THF_DHG_CYH"/>
    <property type="match status" value="1"/>
</dbReference>
<dbReference type="InterPro" id="IPR046346">
    <property type="entry name" value="Aminoacid_DH-like_N_sf"/>
</dbReference>
<dbReference type="InterPro" id="IPR036291">
    <property type="entry name" value="NAD(P)-bd_dom_sf"/>
</dbReference>
<dbReference type="InterPro" id="IPR000672">
    <property type="entry name" value="THF_DH/CycHdrlase"/>
</dbReference>
<dbReference type="InterPro" id="IPR020630">
    <property type="entry name" value="THF_DH/CycHdrlase_cat_dom"/>
</dbReference>
<dbReference type="InterPro" id="IPR020867">
    <property type="entry name" value="THF_DH/CycHdrlase_CS"/>
</dbReference>
<dbReference type="InterPro" id="IPR020631">
    <property type="entry name" value="THF_DH/CycHdrlase_NAD-bd_dom"/>
</dbReference>
<dbReference type="NCBIfam" id="NF008058">
    <property type="entry name" value="PRK10792.1"/>
    <property type="match status" value="1"/>
</dbReference>
<dbReference type="NCBIfam" id="NF010783">
    <property type="entry name" value="PRK14186.1"/>
    <property type="match status" value="1"/>
</dbReference>
<dbReference type="PANTHER" id="PTHR48099:SF5">
    <property type="entry name" value="C-1-TETRAHYDROFOLATE SYNTHASE, CYTOPLASMIC"/>
    <property type="match status" value="1"/>
</dbReference>
<dbReference type="PANTHER" id="PTHR48099">
    <property type="entry name" value="C-1-TETRAHYDROFOLATE SYNTHASE, CYTOPLASMIC-RELATED"/>
    <property type="match status" value="1"/>
</dbReference>
<dbReference type="Pfam" id="PF00763">
    <property type="entry name" value="THF_DHG_CYH"/>
    <property type="match status" value="1"/>
</dbReference>
<dbReference type="Pfam" id="PF02882">
    <property type="entry name" value="THF_DHG_CYH_C"/>
    <property type="match status" value="1"/>
</dbReference>
<dbReference type="PRINTS" id="PR00085">
    <property type="entry name" value="THFDHDRGNASE"/>
</dbReference>
<dbReference type="SUPFAM" id="SSF53223">
    <property type="entry name" value="Aminoacid dehydrogenase-like, N-terminal domain"/>
    <property type="match status" value="1"/>
</dbReference>
<dbReference type="SUPFAM" id="SSF51735">
    <property type="entry name" value="NAD(P)-binding Rossmann-fold domains"/>
    <property type="match status" value="1"/>
</dbReference>
<dbReference type="PROSITE" id="PS00767">
    <property type="entry name" value="THF_DHG_CYH_2"/>
    <property type="match status" value="1"/>
</dbReference>
<evidence type="ECO:0000255" key="1">
    <source>
        <dbReference type="HAMAP-Rule" id="MF_01576"/>
    </source>
</evidence>
<reference key="1">
    <citation type="journal article" date="2008" name="BMC Genomics">
        <title>Acidithiobacillus ferrooxidans metabolism: from genome sequence to industrial applications.</title>
        <authorList>
            <person name="Valdes J."/>
            <person name="Pedroso I."/>
            <person name="Quatrini R."/>
            <person name="Dodson R.J."/>
            <person name="Tettelin H."/>
            <person name="Blake R. II"/>
            <person name="Eisen J.A."/>
            <person name="Holmes D.S."/>
        </authorList>
    </citation>
    <scope>NUCLEOTIDE SEQUENCE [LARGE SCALE GENOMIC DNA]</scope>
    <source>
        <strain>ATCC 23270 / DSM 14882 / CIP 104768 / NCIMB 8455</strain>
    </source>
</reference>
<sequence>MTARRIDGKAIAQKIHADISLRSHAFLRQWGRSPGLAVVLVGADPASRIYVQKKRETCASVGIASFSANLPADTNPQQLLAHIGELNVNDAVDGILVQLPLPPHFDPEEIIEAIAVEKDVDGFHPYNIGRLALRAPLLRSCTPAGIMTLLQESGIDIKGKEAVIVGASNIVGRPMALELLLAGATVTVCHRFTRDLAAHVGRAELLVAAAGKPGLISGAWIREGAVVIDVGINRLPDGRVTGDVDFAGAEQRAAWITPVPGGVGPMTVATLLQNTLIAAEHRMGAPHV</sequence>
<protein>
    <recommendedName>
        <fullName evidence="1">Bifunctional protein FolD</fullName>
    </recommendedName>
    <domain>
        <recommendedName>
            <fullName evidence="1">Methylenetetrahydrofolate dehydrogenase</fullName>
            <ecNumber evidence="1">1.5.1.5</ecNumber>
        </recommendedName>
    </domain>
    <domain>
        <recommendedName>
            <fullName evidence="1">Methenyltetrahydrofolate cyclohydrolase</fullName>
            <ecNumber evidence="1">3.5.4.9</ecNumber>
        </recommendedName>
    </domain>
</protein>
<organism>
    <name type="scientific">Acidithiobacillus ferrooxidans (strain ATCC 23270 / DSM 14882 / CIP 104768 / NCIMB 8455)</name>
    <name type="common">Ferrobacillus ferrooxidans (strain ATCC 23270)</name>
    <dbReference type="NCBI Taxonomy" id="243159"/>
    <lineage>
        <taxon>Bacteria</taxon>
        <taxon>Pseudomonadati</taxon>
        <taxon>Pseudomonadota</taxon>
        <taxon>Acidithiobacillia</taxon>
        <taxon>Acidithiobacillales</taxon>
        <taxon>Acidithiobacillaceae</taxon>
        <taxon>Acidithiobacillus</taxon>
    </lineage>
</organism>